<reference key="1">
    <citation type="journal article" date="2008" name="Genome Res.">
        <title>Comparative genome analysis of Salmonella enteritidis PT4 and Salmonella gallinarum 287/91 provides insights into evolutionary and host adaptation pathways.</title>
        <authorList>
            <person name="Thomson N.R."/>
            <person name="Clayton D.J."/>
            <person name="Windhorst D."/>
            <person name="Vernikos G."/>
            <person name="Davidson S."/>
            <person name="Churcher C."/>
            <person name="Quail M.A."/>
            <person name="Stevens M."/>
            <person name="Jones M.A."/>
            <person name="Watson M."/>
            <person name="Barron A."/>
            <person name="Layton A."/>
            <person name="Pickard D."/>
            <person name="Kingsley R.A."/>
            <person name="Bignell A."/>
            <person name="Clark L."/>
            <person name="Harris B."/>
            <person name="Ormond D."/>
            <person name="Abdellah Z."/>
            <person name="Brooks K."/>
            <person name="Cherevach I."/>
            <person name="Chillingworth T."/>
            <person name="Woodward J."/>
            <person name="Norberczak H."/>
            <person name="Lord A."/>
            <person name="Arrowsmith C."/>
            <person name="Jagels K."/>
            <person name="Moule S."/>
            <person name="Mungall K."/>
            <person name="Saunders M."/>
            <person name="Whitehead S."/>
            <person name="Chabalgoity J.A."/>
            <person name="Maskell D."/>
            <person name="Humphreys T."/>
            <person name="Roberts M."/>
            <person name="Barrow P.A."/>
            <person name="Dougan G."/>
            <person name="Parkhill J."/>
        </authorList>
    </citation>
    <scope>NUCLEOTIDE SEQUENCE [LARGE SCALE GENOMIC DNA]</scope>
    <source>
        <strain>287/91 / NCTC 13346</strain>
    </source>
</reference>
<organism>
    <name type="scientific">Salmonella gallinarum (strain 287/91 / NCTC 13346)</name>
    <dbReference type="NCBI Taxonomy" id="550538"/>
    <lineage>
        <taxon>Bacteria</taxon>
        <taxon>Pseudomonadati</taxon>
        <taxon>Pseudomonadota</taxon>
        <taxon>Gammaproteobacteria</taxon>
        <taxon>Enterobacterales</taxon>
        <taxon>Enterobacteriaceae</taxon>
        <taxon>Salmonella</taxon>
    </lineage>
</organism>
<sequence>MELTTRTLPTRKHIALVAHDHCKQMLMNWVERHQPLLEKHDLYATGTTGNLIQRATGMDVNAMLSGPMGGDQQVGALISEGKIDVLIFFWDPLNAVPHDPDVKALLRLATVWNIPVATNVSTADFIIQSPHFNDAVDILIPDYARYLAERLK</sequence>
<evidence type="ECO:0000255" key="1">
    <source>
        <dbReference type="HAMAP-Rule" id="MF_00549"/>
    </source>
</evidence>
<proteinExistence type="inferred from homology"/>
<keyword id="KW-0456">Lyase</keyword>
<dbReference type="EC" id="4.2.3.3" evidence="1"/>
<dbReference type="EMBL" id="AM933173">
    <property type="protein sequence ID" value="CAR36856.1"/>
    <property type="molecule type" value="Genomic_DNA"/>
</dbReference>
<dbReference type="RefSeq" id="WP_000424183.1">
    <property type="nucleotide sequence ID" value="NC_011274.1"/>
</dbReference>
<dbReference type="SMR" id="B5R6C9"/>
<dbReference type="KEGG" id="seg:SG0966"/>
<dbReference type="HOGENOM" id="CLU_120420_0_1_6"/>
<dbReference type="Proteomes" id="UP000008321">
    <property type="component" value="Chromosome"/>
</dbReference>
<dbReference type="GO" id="GO:0005829">
    <property type="term" value="C:cytosol"/>
    <property type="evidence" value="ECO:0007669"/>
    <property type="project" value="TreeGrafter"/>
</dbReference>
<dbReference type="GO" id="GO:0008929">
    <property type="term" value="F:methylglyoxal synthase activity"/>
    <property type="evidence" value="ECO:0007669"/>
    <property type="project" value="UniProtKB-UniRule"/>
</dbReference>
<dbReference type="GO" id="GO:0019242">
    <property type="term" value="P:methylglyoxal biosynthetic process"/>
    <property type="evidence" value="ECO:0007669"/>
    <property type="project" value="UniProtKB-UniRule"/>
</dbReference>
<dbReference type="CDD" id="cd01422">
    <property type="entry name" value="MGS"/>
    <property type="match status" value="1"/>
</dbReference>
<dbReference type="FunFam" id="3.40.50.1380:FF:000002">
    <property type="entry name" value="Methylglyoxal synthase"/>
    <property type="match status" value="1"/>
</dbReference>
<dbReference type="Gene3D" id="3.40.50.1380">
    <property type="entry name" value="Methylglyoxal synthase-like domain"/>
    <property type="match status" value="1"/>
</dbReference>
<dbReference type="HAMAP" id="MF_00549">
    <property type="entry name" value="Methylglyoxal_synth"/>
    <property type="match status" value="1"/>
</dbReference>
<dbReference type="InterPro" id="IPR004363">
    <property type="entry name" value="Methylgl_synth"/>
</dbReference>
<dbReference type="InterPro" id="IPR018148">
    <property type="entry name" value="Methylglyoxal_synth_AS"/>
</dbReference>
<dbReference type="InterPro" id="IPR011607">
    <property type="entry name" value="MGS-like_dom"/>
</dbReference>
<dbReference type="InterPro" id="IPR036914">
    <property type="entry name" value="MGS-like_dom_sf"/>
</dbReference>
<dbReference type="NCBIfam" id="TIGR00160">
    <property type="entry name" value="MGSA"/>
    <property type="match status" value="1"/>
</dbReference>
<dbReference type="NCBIfam" id="NF003559">
    <property type="entry name" value="PRK05234.1"/>
    <property type="match status" value="1"/>
</dbReference>
<dbReference type="PANTHER" id="PTHR30492">
    <property type="entry name" value="METHYLGLYOXAL SYNTHASE"/>
    <property type="match status" value="1"/>
</dbReference>
<dbReference type="PANTHER" id="PTHR30492:SF0">
    <property type="entry name" value="METHYLGLYOXAL SYNTHASE"/>
    <property type="match status" value="1"/>
</dbReference>
<dbReference type="Pfam" id="PF02142">
    <property type="entry name" value="MGS"/>
    <property type="match status" value="1"/>
</dbReference>
<dbReference type="PIRSF" id="PIRSF006614">
    <property type="entry name" value="Methylglyox_syn"/>
    <property type="match status" value="1"/>
</dbReference>
<dbReference type="SMART" id="SM00851">
    <property type="entry name" value="MGS"/>
    <property type="match status" value="1"/>
</dbReference>
<dbReference type="SUPFAM" id="SSF52335">
    <property type="entry name" value="Methylglyoxal synthase-like"/>
    <property type="match status" value="1"/>
</dbReference>
<dbReference type="PROSITE" id="PS01335">
    <property type="entry name" value="METHYLGLYOXAL_SYNTH"/>
    <property type="match status" value="1"/>
</dbReference>
<dbReference type="PROSITE" id="PS51855">
    <property type="entry name" value="MGS"/>
    <property type="match status" value="1"/>
</dbReference>
<name>MGSA_SALG2</name>
<gene>
    <name evidence="1" type="primary">mgsA</name>
    <name type="ordered locus">SG0966</name>
</gene>
<comment type="function">
    <text evidence="1">Catalyzes the formation of methylglyoxal from dihydroxyacetone phosphate.</text>
</comment>
<comment type="catalytic activity">
    <reaction evidence="1">
        <text>dihydroxyacetone phosphate = methylglyoxal + phosphate</text>
        <dbReference type="Rhea" id="RHEA:17937"/>
        <dbReference type="ChEBI" id="CHEBI:17158"/>
        <dbReference type="ChEBI" id="CHEBI:43474"/>
        <dbReference type="ChEBI" id="CHEBI:57642"/>
        <dbReference type="EC" id="4.2.3.3"/>
    </reaction>
</comment>
<comment type="similarity">
    <text evidence="1">Belongs to the methylglyoxal synthase family.</text>
</comment>
<protein>
    <recommendedName>
        <fullName evidence="1">Methylglyoxal synthase</fullName>
        <shortName evidence="1">MGS</shortName>
        <ecNumber evidence="1">4.2.3.3</ecNumber>
    </recommendedName>
</protein>
<feature type="chain" id="PRO_1000129005" description="Methylglyoxal synthase">
    <location>
        <begin position="1"/>
        <end position="152"/>
    </location>
</feature>
<feature type="domain" description="MGS-like" evidence="1">
    <location>
        <begin position="6"/>
        <end position="152"/>
    </location>
</feature>
<feature type="active site" description="Proton donor/acceptor" evidence="1">
    <location>
        <position position="71"/>
    </location>
</feature>
<feature type="binding site" evidence="1">
    <location>
        <position position="19"/>
    </location>
    <ligand>
        <name>substrate</name>
    </ligand>
</feature>
<feature type="binding site" evidence="1">
    <location>
        <position position="23"/>
    </location>
    <ligand>
        <name>substrate</name>
    </ligand>
</feature>
<feature type="binding site" evidence="1">
    <location>
        <begin position="45"/>
        <end position="48"/>
    </location>
    <ligand>
        <name>substrate</name>
    </ligand>
</feature>
<feature type="binding site" evidence="1">
    <location>
        <begin position="65"/>
        <end position="66"/>
    </location>
    <ligand>
        <name>substrate</name>
    </ligand>
</feature>
<feature type="binding site" evidence="1">
    <location>
        <position position="98"/>
    </location>
    <ligand>
        <name>substrate</name>
    </ligand>
</feature>
<accession>B5R6C9</accession>